<reference key="1">
    <citation type="journal article" date="1998" name="Endocrinology">
        <title>DEFT, a novel death effector domain-containing molecule predominantly expressed in testicular germ cells.</title>
        <authorList>
            <person name="Leo C.P."/>
            <person name="Hsu S.Y."/>
            <person name="McGee E.A."/>
            <person name="Salanova M."/>
            <person name="Hsueh A.J.W."/>
        </authorList>
    </citation>
    <scope>NUCLEOTIDE SEQUENCE [MRNA]</scope>
    <scope>TISSUE SPECIFICITY</scope>
    <scope>DEVELOPMENTAL STAGE</scope>
    <source>
        <tissue>Testis</tissue>
    </source>
</reference>
<sequence length="318" mass="36847">MAGLKRRASQVWPEERVEQEHGLYSLHRMFDIVGTHLTHRDVRVLSFLFVDVIDDHERGLIRNGRDFLLALERQGRCDESNFRQVLQLLRIITRHDLLPYVTLKKRRAVCPDLVDKYLEETSIRYVTPRALSDPEPRPPQPSKTVPPHYPVVCCPTSGSQMCSKRPARGRTTLGSQRKRRKSVTPDPKEKQTCDIRLRVRAEYCQHETALQGNVFSNKQDPLERQFERFNQANTILKSRDLGSIICDIKFSELTYLDAFWRDYINGSLLEALKGVFITDSLKQAVGHEAIKLLVNVDEEDYELGRQKLLRNLMLQALP</sequence>
<protein>
    <recommendedName>
        <fullName>Death effector domain-containing protein</fullName>
    </recommendedName>
    <alternativeName>
        <fullName>Death effector domain-containing testicular molecule</fullName>
    </alternativeName>
</protein>
<keyword id="KW-0053">Apoptosis</keyword>
<keyword id="KW-0963">Cytoplasm</keyword>
<keyword id="KW-0238">DNA-binding</keyword>
<keyword id="KW-0539">Nucleus</keyword>
<keyword id="KW-1185">Reference proteome</keyword>
<keyword id="KW-0678">Repressor</keyword>
<keyword id="KW-0804">Transcription</keyword>
<keyword id="KW-0805">Transcription regulation</keyword>
<keyword id="KW-0832">Ubl conjugation</keyword>
<name>DEDD_RAT</name>
<organism>
    <name type="scientific">Rattus norvegicus</name>
    <name type="common">Rat</name>
    <dbReference type="NCBI Taxonomy" id="10116"/>
    <lineage>
        <taxon>Eukaryota</taxon>
        <taxon>Metazoa</taxon>
        <taxon>Chordata</taxon>
        <taxon>Craniata</taxon>
        <taxon>Vertebrata</taxon>
        <taxon>Euteleostomi</taxon>
        <taxon>Mammalia</taxon>
        <taxon>Eutheria</taxon>
        <taxon>Euarchontoglires</taxon>
        <taxon>Glires</taxon>
        <taxon>Rodentia</taxon>
        <taxon>Myomorpha</taxon>
        <taxon>Muroidea</taxon>
        <taxon>Muridae</taxon>
        <taxon>Murinae</taxon>
        <taxon>Rattus</taxon>
    </lineage>
</organism>
<proteinExistence type="evidence at transcript level"/>
<accession>Q9Z2K0</accession>
<feature type="chain" id="PRO_0000191276" description="Death effector domain-containing protein">
    <location>
        <begin position="1"/>
        <end position="318"/>
    </location>
</feature>
<feature type="domain" description="DED" evidence="2">
    <location>
        <begin position="25"/>
        <end position="103"/>
    </location>
</feature>
<feature type="region of interest" description="Disordered" evidence="3">
    <location>
        <begin position="128"/>
        <end position="191"/>
    </location>
</feature>
<gene>
    <name type="primary">Dedd</name>
    <name type="synonym">Deft</name>
</gene>
<comment type="function">
    <text evidence="1">A scaffold protein that directs CASP3 to certain substrates and facilitates their ordered degradation during apoptosis. May also play a role in mediating CASP3 cleavage of KRT18. Regulates degradation of intermediate filaments during apoptosis. May play a role in the general transcription machinery in the nucleus and might be an important regulator of the activity of GTF3C3. Inhibits DNA transcription in vitro (By similarity).</text>
</comment>
<comment type="subunit">
    <text evidence="1">Interacts with CASP8, CASP10, KRT8, KRT18, CASP3 and FADD. Homodimerizes and heterodimerizes with DEDD2 (By similarity).</text>
</comment>
<comment type="subcellular location">
    <subcellularLocation>
        <location evidence="1">Cytoplasm</location>
    </subcellularLocation>
    <subcellularLocation>
        <location evidence="1">Nucleus</location>
        <location evidence="1">Nucleolus</location>
    </subcellularLocation>
    <text evidence="1">Translocated to the nucleus during CD95-mediated apoptosis where it is localized in the nucleoli. Following apoptosis induction, the mono and/or diubiquitination form increases and forms filamentous structures that colocalize with KRT8 and KRT18 intermediate filament network in simple epithelial cells (By similarity).</text>
</comment>
<comment type="tissue specificity">
    <text evidence="4">Widely expressed with highest levels in testis. Within the testis, highly expressed in germ cells but not expressed in Sertoli cells.</text>
</comment>
<comment type="developmental stage">
    <text evidence="4">First detected in 20-day-old animals. Reaches a peak at 30 days.</text>
</comment>
<comment type="PTM">
    <text>Exists predominantly in a mono- or diubiquitinated form.</text>
</comment>
<evidence type="ECO:0000250" key="1"/>
<evidence type="ECO:0000255" key="2">
    <source>
        <dbReference type="PROSITE-ProRule" id="PRU00065"/>
    </source>
</evidence>
<evidence type="ECO:0000256" key="3">
    <source>
        <dbReference type="SAM" id="MobiDB-lite"/>
    </source>
</evidence>
<evidence type="ECO:0000269" key="4">
    <source>
    </source>
</evidence>
<dbReference type="EMBL" id="AF053362">
    <property type="protein sequence ID" value="AAC80287.1"/>
    <property type="molecule type" value="mRNA"/>
</dbReference>
<dbReference type="RefSeq" id="NP_113988.1">
    <property type="nucleotide sequence ID" value="NM_031800.1"/>
</dbReference>
<dbReference type="RefSeq" id="XP_006250331.1">
    <property type="nucleotide sequence ID" value="XM_006250269.5"/>
</dbReference>
<dbReference type="RefSeq" id="XP_006250334.1">
    <property type="nucleotide sequence ID" value="XM_006250272.5"/>
</dbReference>
<dbReference type="RefSeq" id="XP_006250336.1">
    <property type="nucleotide sequence ID" value="XM_006250274.5"/>
</dbReference>
<dbReference type="RefSeq" id="XP_017454431.1">
    <property type="nucleotide sequence ID" value="XM_017598942.3"/>
</dbReference>
<dbReference type="RefSeq" id="XP_017454432.1">
    <property type="nucleotide sequence ID" value="XM_017598943.3"/>
</dbReference>
<dbReference type="RefSeq" id="XP_017454433.1">
    <property type="nucleotide sequence ID" value="XM_017598944.3"/>
</dbReference>
<dbReference type="RefSeq" id="XP_017454434.1">
    <property type="nucleotide sequence ID" value="XM_017598945.3"/>
</dbReference>
<dbReference type="RefSeq" id="XP_017454435.1">
    <property type="nucleotide sequence ID" value="XM_017598946.3"/>
</dbReference>
<dbReference type="RefSeq" id="XP_038947053.1">
    <property type="nucleotide sequence ID" value="XM_039091125.2"/>
</dbReference>
<dbReference type="RefSeq" id="XP_063128713.1">
    <property type="nucleotide sequence ID" value="XM_063272643.1"/>
</dbReference>
<dbReference type="RefSeq" id="XP_063128714.1">
    <property type="nucleotide sequence ID" value="XM_063272644.1"/>
</dbReference>
<dbReference type="RefSeq" id="XP_063128715.1">
    <property type="nucleotide sequence ID" value="XM_063272645.1"/>
</dbReference>
<dbReference type="RefSeq" id="XP_063128716.1">
    <property type="nucleotide sequence ID" value="XM_063272646.1"/>
</dbReference>
<dbReference type="RefSeq" id="XP_063128717.1">
    <property type="nucleotide sequence ID" value="XM_063272647.1"/>
</dbReference>
<dbReference type="RefSeq" id="XP_063128718.1">
    <property type="nucleotide sequence ID" value="XM_063272648.1"/>
</dbReference>
<dbReference type="RefSeq" id="XP_063128719.1">
    <property type="nucleotide sequence ID" value="XM_063272649.1"/>
</dbReference>
<dbReference type="RefSeq" id="XP_063128720.1">
    <property type="nucleotide sequence ID" value="XM_063272650.1"/>
</dbReference>
<dbReference type="SMR" id="Q9Z2K0"/>
<dbReference type="FunCoup" id="Q9Z2K0">
    <property type="interactions" value="2204"/>
</dbReference>
<dbReference type="STRING" id="10116.ENSRNOP00000005147"/>
<dbReference type="GlyGen" id="Q9Z2K0">
    <property type="glycosylation" value="1 site"/>
</dbReference>
<dbReference type="PhosphoSitePlus" id="Q9Z2K0"/>
<dbReference type="PaxDb" id="10116-ENSRNOP00000005147"/>
<dbReference type="Ensembl" id="ENSRNOT00000005147.3">
    <property type="protein sequence ID" value="ENSRNOP00000005147.1"/>
    <property type="gene ID" value="ENSRNOG00000003779.3"/>
</dbReference>
<dbReference type="GeneID" id="83631"/>
<dbReference type="KEGG" id="rno:83631"/>
<dbReference type="UCSC" id="RGD:620050">
    <property type="organism name" value="rat"/>
</dbReference>
<dbReference type="AGR" id="RGD:620050"/>
<dbReference type="CTD" id="9191"/>
<dbReference type="RGD" id="620050">
    <property type="gene designation" value="Dedd"/>
</dbReference>
<dbReference type="eggNOG" id="ENOG502QRWB">
    <property type="taxonomic scope" value="Eukaryota"/>
</dbReference>
<dbReference type="GeneTree" id="ENSGT00390000008714"/>
<dbReference type="HOGENOM" id="CLU_053869_0_0_1"/>
<dbReference type="InParanoid" id="Q9Z2K0"/>
<dbReference type="OMA" id="CKDAVAH"/>
<dbReference type="OrthoDB" id="6422954at2759"/>
<dbReference type="PhylomeDB" id="Q9Z2K0"/>
<dbReference type="TreeFam" id="TF331807"/>
<dbReference type="PRO" id="PR:Q9Z2K0"/>
<dbReference type="Proteomes" id="UP000002494">
    <property type="component" value="Chromosome 13"/>
</dbReference>
<dbReference type="Bgee" id="ENSRNOG00000003779">
    <property type="expression patterns" value="Expressed in skeletal muscle tissue and 19 other cell types or tissues"/>
</dbReference>
<dbReference type="GO" id="GO:0005737">
    <property type="term" value="C:cytoplasm"/>
    <property type="evidence" value="ECO:0000250"/>
    <property type="project" value="UniProtKB"/>
</dbReference>
<dbReference type="GO" id="GO:0005730">
    <property type="term" value="C:nucleolus"/>
    <property type="evidence" value="ECO:0000250"/>
    <property type="project" value="UniProtKB"/>
</dbReference>
<dbReference type="GO" id="GO:0003677">
    <property type="term" value="F:DNA binding"/>
    <property type="evidence" value="ECO:0000250"/>
    <property type="project" value="UniProtKB"/>
</dbReference>
<dbReference type="GO" id="GO:0046697">
    <property type="term" value="P:decidualization"/>
    <property type="evidence" value="ECO:0000266"/>
    <property type="project" value="RGD"/>
</dbReference>
<dbReference type="GO" id="GO:0008625">
    <property type="term" value="P:extrinsic apoptotic signaling pathway via death domain receptors"/>
    <property type="evidence" value="ECO:0000266"/>
    <property type="project" value="RGD"/>
</dbReference>
<dbReference type="GO" id="GO:0042177">
    <property type="term" value="P:negative regulation of protein catabolic process"/>
    <property type="evidence" value="ECO:0000266"/>
    <property type="project" value="RGD"/>
</dbReference>
<dbReference type="GO" id="GO:1901837">
    <property type="term" value="P:negative regulation of transcription of nucleolar large rRNA by RNA polymerase I"/>
    <property type="evidence" value="ECO:0000266"/>
    <property type="project" value="RGD"/>
</dbReference>
<dbReference type="GO" id="GO:0042981">
    <property type="term" value="P:regulation of apoptotic process"/>
    <property type="evidence" value="ECO:0007669"/>
    <property type="project" value="InterPro"/>
</dbReference>
<dbReference type="GO" id="GO:0007283">
    <property type="term" value="P:spermatogenesis"/>
    <property type="evidence" value="ECO:0000270"/>
    <property type="project" value="RGD"/>
</dbReference>
<dbReference type="CDD" id="cd08790">
    <property type="entry name" value="DED_DEDD"/>
    <property type="match status" value="1"/>
</dbReference>
<dbReference type="FunFam" id="1.10.533.10:FF:000004">
    <property type="entry name" value="Death effector domain-containing protein-like"/>
    <property type="match status" value="1"/>
</dbReference>
<dbReference type="Gene3D" id="1.10.533.10">
    <property type="entry name" value="Death Domain, Fas"/>
    <property type="match status" value="1"/>
</dbReference>
<dbReference type="InterPro" id="IPR011029">
    <property type="entry name" value="DEATH-like_dom_sf"/>
</dbReference>
<dbReference type="InterPro" id="IPR001875">
    <property type="entry name" value="DED_dom"/>
</dbReference>
<dbReference type="InterPro" id="IPR038856">
    <property type="entry name" value="DEDD/DEDD2"/>
</dbReference>
<dbReference type="InterPro" id="IPR049341">
    <property type="entry name" value="TRADD-like_N"/>
</dbReference>
<dbReference type="PANTHER" id="PTHR15205">
    <property type="entry name" value="DEATH EFFECTOR DOMAIN-CONTAINING PROTEIN"/>
    <property type="match status" value="1"/>
</dbReference>
<dbReference type="PANTHER" id="PTHR15205:SF2">
    <property type="entry name" value="DEATH EFFECTOR DOMAIN-CONTAINING PROTEIN"/>
    <property type="match status" value="1"/>
</dbReference>
<dbReference type="Pfam" id="PF01335">
    <property type="entry name" value="DED"/>
    <property type="match status" value="1"/>
</dbReference>
<dbReference type="Pfam" id="PF20694">
    <property type="entry name" value="TRADD-like_N"/>
    <property type="match status" value="1"/>
</dbReference>
<dbReference type="SMART" id="SM00031">
    <property type="entry name" value="DED"/>
    <property type="match status" value="1"/>
</dbReference>
<dbReference type="SUPFAM" id="SSF47986">
    <property type="entry name" value="DEATH domain"/>
    <property type="match status" value="1"/>
</dbReference>
<dbReference type="PROSITE" id="PS50168">
    <property type="entry name" value="DED"/>
    <property type="match status" value="1"/>
</dbReference>